<keyword id="KW-0240">DNA-directed RNA polymerase</keyword>
<keyword id="KW-0548">Nucleotidyltransferase</keyword>
<keyword id="KW-0804">Transcription</keyword>
<keyword id="KW-0808">Transferase</keyword>
<gene>
    <name evidence="1" type="primary">rpoB</name>
    <name type="ordered locus">FTN_1568</name>
</gene>
<evidence type="ECO:0000255" key="1">
    <source>
        <dbReference type="HAMAP-Rule" id="MF_01321"/>
    </source>
</evidence>
<accession>A0Q867</accession>
<proteinExistence type="inferred from homology"/>
<feature type="chain" id="PRO_0000300317" description="DNA-directed RNA polymerase subunit beta">
    <location>
        <begin position="1"/>
        <end position="1358"/>
    </location>
</feature>
<dbReference type="EC" id="2.7.7.6" evidence="1"/>
<dbReference type="EMBL" id="CP000439">
    <property type="protein sequence ID" value="ABK90432.1"/>
    <property type="molecule type" value="Genomic_DNA"/>
</dbReference>
<dbReference type="RefSeq" id="WP_011733723.1">
    <property type="nucleotide sequence ID" value="NZ_CP009633.1"/>
</dbReference>
<dbReference type="SMR" id="A0Q867"/>
<dbReference type="KEGG" id="ftn:FTN_1568"/>
<dbReference type="KEGG" id="ftx:AW25_430"/>
<dbReference type="BioCyc" id="FTUL401614:G1G75-1620-MONOMER"/>
<dbReference type="Proteomes" id="UP000000762">
    <property type="component" value="Chromosome"/>
</dbReference>
<dbReference type="GO" id="GO:0000428">
    <property type="term" value="C:DNA-directed RNA polymerase complex"/>
    <property type="evidence" value="ECO:0007669"/>
    <property type="project" value="UniProtKB-KW"/>
</dbReference>
<dbReference type="GO" id="GO:0003677">
    <property type="term" value="F:DNA binding"/>
    <property type="evidence" value="ECO:0007669"/>
    <property type="project" value="UniProtKB-UniRule"/>
</dbReference>
<dbReference type="GO" id="GO:0003899">
    <property type="term" value="F:DNA-directed RNA polymerase activity"/>
    <property type="evidence" value="ECO:0007669"/>
    <property type="project" value="UniProtKB-UniRule"/>
</dbReference>
<dbReference type="GO" id="GO:0032549">
    <property type="term" value="F:ribonucleoside binding"/>
    <property type="evidence" value="ECO:0007669"/>
    <property type="project" value="InterPro"/>
</dbReference>
<dbReference type="GO" id="GO:0006351">
    <property type="term" value="P:DNA-templated transcription"/>
    <property type="evidence" value="ECO:0007669"/>
    <property type="project" value="UniProtKB-UniRule"/>
</dbReference>
<dbReference type="CDD" id="cd00653">
    <property type="entry name" value="RNA_pol_B_RPB2"/>
    <property type="match status" value="1"/>
</dbReference>
<dbReference type="FunFam" id="3.90.1800.10:FF:000001">
    <property type="entry name" value="DNA-directed RNA polymerase subunit beta"/>
    <property type="match status" value="1"/>
</dbReference>
<dbReference type="Gene3D" id="2.40.50.100">
    <property type="match status" value="1"/>
</dbReference>
<dbReference type="Gene3D" id="2.40.50.150">
    <property type="match status" value="1"/>
</dbReference>
<dbReference type="Gene3D" id="3.90.1100.10">
    <property type="match status" value="2"/>
</dbReference>
<dbReference type="Gene3D" id="2.30.150.10">
    <property type="entry name" value="DNA-directed RNA polymerase, beta subunit, external 1 domain"/>
    <property type="match status" value="1"/>
</dbReference>
<dbReference type="Gene3D" id="2.40.270.10">
    <property type="entry name" value="DNA-directed RNA polymerase, subunit 2, domain 6"/>
    <property type="match status" value="2"/>
</dbReference>
<dbReference type="Gene3D" id="3.90.1800.10">
    <property type="entry name" value="RNA polymerase alpha subunit dimerisation domain"/>
    <property type="match status" value="1"/>
</dbReference>
<dbReference type="Gene3D" id="3.90.1110.10">
    <property type="entry name" value="RNA polymerase Rpb2, domain 2"/>
    <property type="match status" value="2"/>
</dbReference>
<dbReference type="HAMAP" id="MF_01321">
    <property type="entry name" value="RNApol_bact_RpoB"/>
    <property type="match status" value="1"/>
</dbReference>
<dbReference type="InterPro" id="IPR042107">
    <property type="entry name" value="DNA-dir_RNA_pol_bsu_ext_1_sf"/>
</dbReference>
<dbReference type="InterPro" id="IPR019462">
    <property type="entry name" value="DNA-dir_RNA_pol_bsu_external_1"/>
</dbReference>
<dbReference type="InterPro" id="IPR015712">
    <property type="entry name" value="DNA-dir_RNA_pol_su2"/>
</dbReference>
<dbReference type="InterPro" id="IPR007120">
    <property type="entry name" value="DNA-dir_RNAP_su2_dom"/>
</dbReference>
<dbReference type="InterPro" id="IPR037033">
    <property type="entry name" value="DNA-dir_RNAP_su2_hyb_sf"/>
</dbReference>
<dbReference type="InterPro" id="IPR010243">
    <property type="entry name" value="RNA_pol_bsu_bac"/>
</dbReference>
<dbReference type="InterPro" id="IPR007121">
    <property type="entry name" value="RNA_pol_bsu_CS"/>
</dbReference>
<dbReference type="InterPro" id="IPR007644">
    <property type="entry name" value="RNA_pol_bsu_protrusion"/>
</dbReference>
<dbReference type="InterPro" id="IPR007642">
    <property type="entry name" value="RNA_pol_Rpb2_2"/>
</dbReference>
<dbReference type="InterPro" id="IPR037034">
    <property type="entry name" value="RNA_pol_Rpb2_2_sf"/>
</dbReference>
<dbReference type="InterPro" id="IPR007645">
    <property type="entry name" value="RNA_pol_Rpb2_3"/>
</dbReference>
<dbReference type="InterPro" id="IPR007641">
    <property type="entry name" value="RNA_pol_Rpb2_7"/>
</dbReference>
<dbReference type="InterPro" id="IPR014724">
    <property type="entry name" value="RNA_pol_RPB2_OB-fold"/>
</dbReference>
<dbReference type="NCBIfam" id="NF001616">
    <property type="entry name" value="PRK00405.1"/>
    <property type="match status" value="1"/>
</dbReference>
<dbReference type="NCBIfam" id="TIGR02013">
    <property type="entry name" value="rpoB"/>
    <property type="match status" value="1"/>
</dbReference>
<dbReference type="PANTHER" id="PTHR20856">
    <property type="entry name" value="DNA-DIRECTED RNA POLYMERASE I SUBUNIT 2"/>
    <property type="match status" value="1"/>
</dbReference>
<dbReference type="Pfam" id="PF04563">
    <property type="entry name" value="RNA_pol_Rpb2_1"/>
    <property type="match status" value="1"/>
</dbReference>
<dbReference type="Pfam" id="PF04561">
    <property type="entry name" value="RNA_pol_Rpb2_2"/>
    <property type="match status" value="2"/>
</dbReference>
<dbReference type="Pfam" id="PF04565">
    <property type="entry name" value="RNA_pol_Rpb2_3"/>
    <property type="match status" value="1"/>
</dbReference>
<dbReference type="Pfam" id="PF10385">
    <property type="entry name" value="RNA_pol_Rpb2_45"/>
    <property type="match status" value="1"/>
</dbReference>
<dbReference type="Pfam" id="PF00562">
    <property type="entry name" value="RNA_pol_Rpb2_6"/>
    <property type="match status" value="1"/>
</dbReference>
<dbReference type="Pfam" id="PF04560">
    <property type="entry name" value="RNA_pol_Rpb2_7"/>
    <property type="match status" value="1"/>
</dbReference>
<dbReference type="SUPFAM" id="SSF64484">
    <property type="entry name" value="beta and beta-prime subunits of DNA dependent RNA-polymerase"/>
    <property type="match status" value="1"/>
</dbReference>
<dbReference type="PROSITE" id="PS01166">
    <property type="entry name" value="RNA_POL_BETA"/>
    <property type="match status" value="1"/>
</dbReference>
<organism>
    <name type="scientific">Francisella tularensis subsp. novicida (strain U112)</name>
    <dbReference type="NCBI Taxonomy" id="401614"/>
    <lineage>
        <taxon>Bacteria</taxon>
        <taxon>Pseudomonadati</taxon>
        <taxon>Pseudomonadota</taxon>
        <taxon>Gammaproteobacteria</taxon>
        <taxon>Thiotrichales</taxon>
        <taxon>Francisellaceae</taxon>
        <taxon>Francisella</taxon>
    </lineage>
</organism>
<reference key="1">
    <citation type="journal article" date="2007" name="Genome Biol.">
        <title>Comparison of Francisella tularensis genomes reveals evolutionary events associated with the emergence of human pathogenic strains.</title>
        <authorList>
            <person name="Rohmer L."/>
            <person name="Fong C."/>
            <person name="Abmayr S."/>
            <person name="Wasnick M."/>
            <person name="Larson Freeman T.J."/>
            <person name="Radey M."/>
            <person name="Guina T."/>
            <person name="Svensson K."/>
            <person name="Hayden H.S."/>
            <person name="Jacobs M."/>
            <person name="Gallagher L.A."/>
            <person name="Manoil C."/>
            <person name="Ernst R.K."/>
            <person name="Drees B."/>
            <person name="Buckley D."/>
            <person name="Haugen E."/>
            <person name="Bovee D."/>
            <person name="Zhou Y."/>
            <person name="Chang J."/>
            <person name="Levy R."/>
            <person name="Lim R."/>
            <person name="Gillett W."/>
            <person name="Guenthener D."/>
            <person name="Kang A."/>
            <person name="Shaffer S.A."/>
            <person name="Taylor G."/>
            <person name="Chen J."/>
            <person name="Gallis B."/>
            <person name="D'Argenio D.A."/>
            <person name="Forsman M."/>
            <person name="Olson M.V."/>
            <person name="Goodlett D.R."/>
            <person name="Kaul R."/>
            <person name="Miller S.I."/>
            <person name="Brittnacher M.J."/>
        </authorList>
    </citation>
    <scope>NUCLEOTIDE SEQUENCE [LARGE SCALE GENOMIC DNA]</scope>
    <source>
        <strain>U112</strain>
    </source>
</reference>
<name>RPOB_FRATN</name>
<protein>
    <recommendedName>
        <fullName evidence="1">DNA-directed RNA polymerase subunit beta</fullName>
        <shortName evidence="1">RNAP subunit beta</shortName>
        <ecNumber evidence="1">2.7.7.6</ecNumber>
    </recommendedName>
    <alternativeName>
        <fullName evidence="1">RNA polymerase subunit beta</fullName>
    </alternativeName>
    <alternativeName>
        <fullName evidence="1">Transcriptase subunit beta</fullName>
    </alternativeName>
</protein>
<sequence>MSYSYAEKKRIRKEFGVLPHILDVPYLLSIQTESYKKFLTADAAKGRLHSGLEIVLKQSFPVESKNGQYELHYVDYQIGEPTFDETECQVRGATYDAPLNVKLRLVVYNKDALPNEKIVEDIREEYVYMGDIPLMTTNGTFIINGTERVVVSQLHRSPGVFFSKDDSEEGAFSARIIPYRGSWLDFEFDSKGIIWARIDRKRKFCATVILKALGYTQEQILENFSETKTITFNSKGFALRLDNLSNMKGELLKFDIVDAQDNVIVKKNKKLTSRDVKKIKDAGVDSVAIDFDLVSTLRVAKDIVNEATGEVIAYANDDVTESLLESCVEVGMLELEVIDFITTERGRYISDTLKYDLTRNTDEALVEIYKVLRPGDPPAAASVKALFEGLFFIESRYSLSDIGRMKLNARLGSDKVSKDIYTLENSDIVGVIEELINIRDGKGKVDDIDHLGNRRVRSVGEMVENQFRIGLYRVEKGIRESMSLVHKDKLMPKDIVNSKPITAAIKEFFTSGALSQFMDQDNPLSEVTHKRRISALGPGGLSRDRAGFEVRDVHATHYGRLCPIETPEGPNIGLINSLASYARVNDYGFLEAPYRKVVDGKVTDEIEYLSAIDEDNYVIAQASTKLDENNHFVEDLIQCRSGGEAIFTESSRVQYMDVSAKQMVSAAAALIPFLEHDDANRVLMGANMQRQAVPTLKSEKPLVGTGMEKIVARDSGNCIIARNAGEVAEVDSNRIVIKVDTEKSQTSNLVDIYSLTKFKRSNKNTCINQRPIVNVGDKVEAGDILADGFATDFGELSLGHNLMVAFMPWNGYNFEDSILLSERIVKDDKYTSIHIEEFTCVARDTKLGPEEITADIPNVSESSLAKLDESGIVHIGANVEAGDILVAKITPKAEQQLTPEERLLRAIFNEKASNVADSSLRMPSGTSGTVINVQVFENDKGGKSKRALKIEKELIDKARKDFDEEFAVIESVVKSSIEQEVVGAKIQKAKGLKKGAILTKEFLATLPFSKWLEISFEDEKLEEKVQNAREYYEEAKIAIDAKFEAKKKSITQSNELSPGVLKTVKVFVAIKKRIQPGDKMAGRHGNKGVVSRVLPVEDMPYMEDGTPVDVCLNPLGIPSRMNIGQILEAHLGLASYGLGKKIEKTLEKTRKAAELRKTLEEVYNSVGDKKVNLEALNDEEILTLCDNLKGGVPIATPVFDGAKEEDIKSLLKIGGFATNGQMKLFDGRTGKPFDRHVTVGYMYMLKLDHLVDDKMHARSTGSYSLVTQQPLGGKAQFGGQRFGEMEVWALQAYGAAYTLREMLTVKSDDIAGRSKMYKNIVDGKLTMNVDVPESFNVLRNEVRALGIDMDFDYSSEEE</sequence>
<comment type="function">
    <text evidence="1">DNA-dependent RNA polymerase catalyzes the transcription of DNA into RNA using the four ribonucleoside triphosphates as substrates.</text>
</comment>
<comment type="catalytic activity">
    <reaction evidence="1">
        <text>RNA(n) + a ribonucleoside 5'-triphosphate = RNA(n+1) + diphosphate</text>
        <dbReference type="Rhea" id="RHEA:21248"/>
        <dbReference type="Rhea" id="RHEA-COMP:14527"/>
        <dbReference type="Rhea" id="RHEA-COMP:17342"/>
        <dbReference type="ChEBI" id="CHEBI:33019"/>
        <dbReference type="ChEBI" id="CHEBI:61557"/>
        <dbReference type="ChEBI" id="CHEBI:140395"/>
        <dbReference type="EC" id="2.7.7.6"/>
    </reaction>
</comment>
<comment type="subunit">
    <text evidence="1">The RNAP catalytic core consists of 2 alpha, 1 beta, 1 beta' and 1 omega subunit. When a sigma factor is associated with the core the holoenzyme is formed, which can initiate transcription.</text>
</comment>
<comment type="similarity">
    <text evidence="1">Belongs to the RNA polymerase beta chain family.</text>
</comment>